<name>MHR1_SCHPO</name>
<protein>
    <recommendedName>
        <fullName evidence="3">Large ribosomal subunit protein mL67</fullName>
    </recommendedName>
    <alternativeName>
        <fullName>Mitochondrial homologous recombination protein 1</fullName>
    </alternativeName>
</protein>
<sequence>MLEKNKYLYIFRHIQTNQVLLSQGNVLKKTALFQLPYPLQKPVAPNGMRPAKLRKDHWVPLLKVEFPNESMFQSVFMQLLNYRKYRSVQPLTSDLLKLPIPVRRRKIMRQEVPNTIADLADILNKEKFPENSVRLQLSDKSDSEYADWPPSVQIDSEEIKLSRGFREKTTVDEAR</sequence>
<dbReference type="EMBL" id="CU329671">
    <property type="protein sequence ID" value="CAA18414.1"/>
    <property type="molecule type" value="Genomic_DNA"/>
</dbReference>
<dbReference type="PIR" id="T39781">
    <property type="entry name" value="T39781"/>
</dbReference>
<dbReference type="RefSeq" id="NP_595741.1">
    <property type="nucleotide sequence ID" value="NM_001021639.2"/>
</dbReference>
<dbReference type="SMR" id="O60147"/>
<dbReference type="BioGRID" id="277353">
    <property type="interactions" value="1"/>
</dbReference>
<dbReference type="ComplexPortal" id="CPX-10323">
    <property type="entry name" value="54S mitochondrial large ribosomal subunit"/>
</dbReference>
<dbReference type="FunCoup" id="O60147">
    <property type="interactions" value="197"/>
</dbReference>
<dbReference type="STRING" id="284812.O60147"/>
<dbReference type="PaxDb" id="4896-SPBC18H10.17c.1"/>
<dbReference type="EnsemblFungi" id="SPBC18H10.17c.1">
    <property type="protein sequence ID" value="SPBC18H10.17c.1:pep"/>
    <property type="gene ID" value="SPBC18H10.17c"/>
</dbReference>
<dbReference type="GeneID" id="2540835"/>
<dbReference type="KEGG" id="spo:2540835"/>
<dbReference type="PomBase" id="SPBC18H10.17c">
    <property type="gene designation" value="mhr1"/>
</dbReference>
<dbReference type="VEuPathDB" id="FungiDB:SPBC18H10.17c"/>
<dbReference type="eggNOG" id="ENOG502T4BC">
    <property type="taxonomic scope" value="Eukaryota"/>
</dbReference>
<dbReference type="HOGENOM" id="CLU_1533452_0_0_1"/>
<dbReference type="InParanoid" id="O60147"/>
<dbReference type="OMA" id="RKDHWVP"/>
<dbReference type="PhylomeDB" id="O60147"/>
<dbReference type="PRO" id="PR:O60147"/>
<dbReference type="Proteomes" id="UP000002485">
    <property type="component" value="Chromosome II"/>
</dbReference>
<dbReference type="GO" id="GO:0005762">
    <property type="term" value="C:mitochondrial large ribosomal subunit"/>
    <property type="evidence" value="ECO:0000266"/>
    <property type="project" value="PomBase"/>
</dbReference>
<dbReference type="GO" id="GO:0005739">
    <property type="term" value="C:mitochondrion"/>
    <property type="evidence" value="ECO:0007005"/>
    <property type="project" value="PomBase"/>
</dbReference>
<dbReference type="GO" id="GO:0000150">
    <property type="term" value="F:DNA strand exchange activity"/>
    <property type="evidence" value="ECO:0007669"/>
    <property type="project" value="InterPro"/>
</dbReference>
<dbReference type="GO" id="GO:0003697">
    <property type="term" value="F:single-stranded DNA binding"/>
    <property type="evidence" value="ECO:0007669"/>
    <property type="project" value="InterPro"/>
</dbReference>
<dbReference type="GO" id="GO:0003735">
    <property type="term" value="F:structural constituent of ribosome"/>
    <property type="evidence" value="ECO:0000318"/>
    <property type="project" value="GO_Central"/>
</dbReference>
<dbReference type="GO" id="GO:0000002">
    <property type="term" value="P:mitochondrial genome maintenance"/>
    <property type="evidence" value="ECO:0007669"/>
    <property type="project" value="InterPro"/>
</dbReference>
<dbReference type="GO" id="GO:0032543">
    <property type="term" value="P:mitochondrial translation"/>
    <property type="evidence" value="ECO:0000266"/>
    <property type="project" value="PomBase"/>
</dbReference>
<dbReference type="InterPro" id="IPR024629">
    <property type="entry name" value="Ribosomal_mL67"/>
</dbReference>
<dbReference type="PANTHER" id="PTHR28184:SF1">
    <property type="entry name" value="LARGE RIBOSOMAL SUBUNIT PROTEIN ML67"/>
    <property type="match status" value="1"/>
</dbReference>
<dbReference type="PANTHER" id="PTHR28184">
    <property type="entry name" value="MITOCHONDRIAL HOMOLOGOUS RECOMBINATION PROTEIN 1"/>
    <property type="match status" value="1"/>
</dbReference>
<dbReference type="Pfam" id="PF12829">
    <property type="entry name" value="Mhr1"/>
    <property type="match status" value="1"/>
</dbReference>
<evidence type="ECO:0000250" key="1">
    <source>
        <dbReference type="UniProtKB" id="Q06630"/>
    </source>
</evidence>
<evidence type="ECO:0000269" key="2">
    <source>
    </source>
</evidence>
<evidence type="ECO:0000305" key="3"/>
<feature type="chain" id="PRO_0000116860" description="Large ribosomal subunit protein mL67">
    <location>
        <begin position="1"/>
        <end position="175"/>
    </location>
</feature>
<keyword id="KW-0496">Mitochondrion</keyword>
<keyword id="KW-1185">Reference proteome</keyword>
<keyword id="KW-0687">Ribonucleoprotein</keyword>
<keyword id="KW-0689">Ribosomal protein</keyword>
<keyword id="KW-0804">Transcription</keyword>
<keyword id="KW-0805">Transcription regulation</keyword>
<proteinExistence type="inferred from homology"/>
<accession>O60147</accession>
<organism>
    <name type="scientific">Schizosaccharomyces pombe (strain 972 / ATCC 24843)</name>
    <name type="common">Fission yeast</name>
    <dbReference type="NCBI Taxonomy" id="284812"/>
    <lineage>
        <taxon>Eukaryota</taxon>
        <taxon>Fungi</taxon>
        <taxon>Dikarya</taxon>
        <taxon>Ascomycota</taxon>
        <taxon>Taphrinomycotina</taxon>
        <taxon>Schizosaccharomycetes</taxon>
        <taxon>Schizosaccharomycetales</taxon>
        <taxon>Schizosaccharomycetaceae</taxon>
        <taxon>Schizosaccharomyces</taxon>
    </lineage>
</organism>
<reference key="1">
    <citation type="journal article" date="2002" name="Nature">
        <title>The genome sequence of Schizosaccharomyces pombe.</title>
        <authorList>
            <person name="Wood V."/>
            <person name="Gwilliam R."/>
            <person name="Rajandream M.A."/>
            <person name="Lyne M.H."/>
            <person name="Lyne R."/>
            <person name="Stewart A."/>
            <person name="Sgouros J.G."/>
            <person name="Peat N."/>
            <person name="Hayles J."/>
            <person name="Baker S.G."/>
            <person name="Basham D."/>
            <person name="Bowman S."/>
            <person name="Brooks K."/>
            <person name="Brown D."/>
            <person name="Brown S."/>
            <person name="Chillingworth T."/>
            <person name="Churcher C.M."/>
            <person name="Collins M."/>
            <person name="Connor R."/>
            <person name="Cronin A."/>
            <person name="Davis P."/>
            <person name="Feltwell T."/>
            <person name="Fraser A."/>
            <person name="Gentles S."/>
            <person name="Goble A."/>
            <person name="Hamlin N."/>
            <person name="Harris D.E."/>
            <person name="Hidalgo J."/>
            <person name="Hodgson G."/>
            <person name="Holroyd S."/>
            <person name="Hornsby T."/>
            <person name="Howarth S."/>
            <person name="Huckle E.J."/>
            <person name="Hunt S."/>
            <person name="Jagels K."/>
            <person name="James K.D."/>
            <person name="Jones L."/>
            <person name="Jones M."/>
            <person name="Leather S."/>
            <person name="McDonald S."/>
            <person name="McLean J."/>
            <person name="Mooney P."/>
            <person name="Moule S."/>
            <person name="Mungall K.L."/>
            <person name="Murphy L.D."/>
            <person name="Niblett D."/>
            <person name="Odell C."/>
            <person name="Oliver K."/>
            <person name="O'Neil S."/>
            <person name="Pearson D."/>
            <person name="Quail M.A."/>
            <person name="Rabbinowitsch E."/>
            <person name="Rutherford K.M."/>
            <person name="Rutter S."/>
            <person name="Saunders D."/>
            <person name="Seeger K."/>
            <person name="Sharp S."/>
            <person name="Skelton J."/>
            <person name="Simmonds M.N."/>
            <person name="Squares R."/>
            <person name="Squares S."/>
            <person name="Stevens K."/>
            <person name="Taylor K."/>
            <person name="Taylor R.G."/>
            <person name="Tivey A."/>
            <person name="Walsh S.V."/>
            <person name="Warren T."/>
            <person name="Whitehead S."/>
            <person name="Woodward J.R."/>
            <person name="Volckaert G."/>
            <person name="Aert R."/>
            <person name="Robben J."/>
            <person name="Grymonprez B."/>
            <person name="Weltjens I."/>
            <person name="Vanstreels E."/>
            <person name="Rieger M."/>
            <person name="Schaefer M."/>
            <person name="Mueller-Auer S."/>
            <person name="Gabel C."/>
            <person name="Fuchs M."/>
            <person name="Duesterhoeft A."/>
            <person name="Fritzc C."/>
            <person name="Holzer E."/>
            <person name="Moestl D."/>
            <person name="Hilbert H."/>
            <person name="Borzym K."/>
            <person name="Langer I."/>
            <person name="Beck A."/>
            <person name="Lehrach H."/>
            <person name="Reinhardt R."/>
            <person name="Pohl T.M."/>
            <person name="Eger P."/>
            <person name="Zimmermann W."/>
            <person name="Wedler H."/>
            <person name="Wambutt R."/>
            <person name="Purnelle B."/>
            <person name="Goffeau A."/>
            <person name="Cadieu E."/>
            <person name="Dreano S."/>
            <person name="Gloux S."/>
            <person name="Lelaure V."/>
            <person name="Mottier S."/>
            <person name="Galibert F."/>
            <person name="Aves S.J."/>
            <person name="Xiang Z."/>
            <person name="Hunt C."/>
            <person name="Moore K."/>
            <person name="Hurst S.M."/>
            <person name="Lucas M."/>
            <person name="Rochet M."/>
            <person name="Gaillardin C."/>
            <person name="Tallada V.A."/>
            <person name="Garzon A."/>
            <person name="Thode G."/>
            <person name="Daga R.R."/>
            <person name="Cruzado L."/>
            <person name="Jimenez J."/>
            <person name="Sanchez M."/>
            <person name="del Rey F."/>
            <person name="Benito J."/>
            <person name="Dominguez A."/>
            <person name="Revuelta J.L."/>
            <person name="Moreno S."/>
            <person name="Armstrong J."/>
            <person name="Forsburg S.L."/>
            <person name="Cerutti L."/>
            <person name="Lowe T."/>
            <person name="McCombie W.R."/>
            <person name="Paulsen I."/>
            <person name="Potashkin J."/>
            <person name="Shpakovski G.V."/>
            <person name="Ussery D."/>
            <person name="Barrell B.G."/>
            <person name="Nurse P."/>
        </authorList>
    </citation>
    <scope>NUCLEOTIDE SEQUENCE [LARGE SCALE GENOMIC DNA]</scope>
    <source>
        <strain>972 / ATCC 24843</strain>
    </source>
</reference>
<reference key="2">
    <citation type="journal article" date="2006" name="Nat. Biotechnol.">
        <title>ORFeome cloning and global analysis of protein localization in the fission yeast Schizosaccharomyces pombe.</title>
        <authorList>
            <person name="Matsuyama A."/>
            <person name="Arai R."/>
            <person name="Yashiroda Y."/>
            <person name="Shirai A."/>
            <person name="Kamata A."/>
            <person name="Sekido S."/>
            <person name="Kobayashi Y."/>
            <person name="Hashimoto A."/>
            <person name="Hamamoto M."/>
            <person name="Hiraoka Y."/>
            <person name="Horinouchi S."/>
            <person name="Yoshida M."/>
        </authorList>
    </citation>
    <scope>SUBCELLULAR LOCATION [LARGE SCALE ANALYSIS]</scope>
</reference>
<comment type="function">
    <text evidence="1">Component of the mitochondrial ribosome (mitoribosome), a dedicated translation machinery responsible for the synthesis of mitochondrial genome-encoded proteins, including at least some of the essential transmembrane subunits of the mitochondrial respiratory chain. The mitoribosomes are attached to the mitochondrial inner membrane and translation products are cotranslationally integrated into the membrane. mL67/mhr1 also has extraribosomal functions, being involved in regulation of mitochondrial DNA recombination, maintenance and repair, and generation of homoplasmic cells. mL67/mhr1 also acts as transcription factor involved in regulation of RNA polymerase II-dependent transcription.</text>
</comment>
<comment type="subunit">
    <text evidence="1">Component of the mitochondrial large ribosomal subunit (mt-LSU). Mature yeast 74S mitochondrial ribosomes consist of a small (37S) and a large (54S) subunit. The 37S small subunit contains a 15S ribosomal RNA (15S mt-rRNA) and at least 32 different proteins. The 54S large subunit contains a 21S rRNA (21S mt-rRNA) and at least 45 different proteins.</text>
</comment>
<comment type="subcellular location">
    <subcellularLocation>
        <location evidence="2">Mitochondrion</location>
    </subcellularLocation>
</comment>
<comment type="similarity">
    <text evidence="3">Belongs to the mitochondrion-specific ribosomal protein mL67 family.</text>
</comment>
<gene>
    <name type="primary">mhr1</name>
    <name type="ORF">SPBC18H10.17c</name>
</gene>